<evidence type="ECO:0000250" key="1">
    <source>
        <dbReference type="UniProtKB" id="P32443"/>
    </source>
</evidence>
<evidence type="ECO:0000250" key="2">
    <source>
        <dbReference type="UniProtKB" id="P50222"/>
    </source>
</evidence>
<evidence type="ECO:0000255" key="3">
    <source>
        <dbReference type="PROSITE-ProRule" id="PRU00108"/>
    </source>
</evidence>
<evidence type="ECO:0000256" key="4">
    <source>
        <dbReference type="SAM" id="MobiDB-lite"/>
    </source>
</evidence>
<evidence type="ECO:0000269" key="5">
    <source>
    </source>
</evidence>
<evidence type="ECO:0000303" key="6">
    <source>
    </source>
</evidence>
<evidence type="ECO:0000312" key="7">
    <source>
        <dbReference type="RGD" id="3079"/>
    </source>
</evidence>
<feature type="chain" id="PRO_0000049199" description="Homeobox protein MOX-2">
    <location>
        <begin position="1"/>
        <end position="303"/>
    </location>
</feature>
<feature type="DNA-binding region" description="Homeobox" evidence="3">
    <location>
        <begin position="186"/>
        <end position="245"/>
    </location>
</feature>
<feature type="region of interest" description="Disordered" evidence="4">
    <location>
        <begin position="63"/>
        <end position="191"/>
    </location>
</feature>
<feature type="region of interest" description="Disordered" evidence="4">
    <location>
        <begin position="279"/>
        <end position="303"/>
    </location>
</feature>
<feature type="compositionally biased region" description="Basic residues" evidence="4">
    <location>
        <begin position="63"/>
        <end position="81"/>
    </location>
</feature>
<feature type="compositionally biased region" description="Polar residues" evidence="4">
    <location>
        <begin position="86"/>
        <end position="100"/>
    </location>
</feature>
<feature type="compositionally biased region" description="Low complexity" evidence="4">
    <location>
        <begin position="111"/>
        <end position="136"/>
    </location>
</feature>
<feature type="compositionally biased region" description="Basic and acidic residues" evidence="4">
    <location>
        <begin position="157"/>
        <end position="170"/>
    </location>
</feature>
<feature type="compositionally biased region" description="Basic and acidic residues" evidence="4">
    <location>
        <begin position="182"/>
        <end position="191"/>
    </location>
</feature>
<feature type="compositionally biased region" description="Basic and acidic residues" evidence="4">
    <location>
        <begin position="289"/>
        <end position="303"/>
    </location>
</feature>
<name>MEOX2_RAT</name>
<comment type="function">
    <text evidence="1 2 5">Mesodermal transcription factor that plays a key role in somitogenesis and somitogenesis and limb muscle differentiation. Required during limb development for normal appendicular muscle formation and for the normal regulation of myogenic genes (By similarity). May have a regulatory role when quiescent vascular smooth muscle cells reenter the cell cycle (PubMed:8098844). Also acts as a negative regulator of angiogenesis. Activates expression of CDKN1A and CDKN2A in endothelial cells, acting as a regulator of vascular cell proliferation. While it activates CDKN1A in a DNA-dependent manner, it activates CDKN2A in a DNA-independent manner (By similarity). Together with TCF15, regulates transcription in heart endothelial cells to regulate fatty acid transport across heart endothelial cells (By similarity).</text>
</comment>
<comment type="subunit">
    <text evidence="1 2">Interacts with RNF10 (By similarity). Interacts with TCF15 (By similarity).</text>
</comment>
<comment type="subcellular location">
    <subcellularLocation>
        <location evidence="2">Nucleus</location>
    </subcellularLocation>
    <subcellularLocation>
        <location evidence="2">Nucleus speckle</location>
    </subcellularLocation>
</comment>
<comment type="tissue specificity">
    <text evidence="5">Aorta and heart. Also detected in lung and kidney.</text>
</comment>
<comment type="induction">
    <text evidence="5">Rapidly and transiently down-regulated during the transition from G0 to G1 induced by mitogen stimulation.</text>
</comment>
<comment type="domain">
    <text evidence="2">The polyhistidine repeat may act as a targeting signal to nuclear speckles.</text>
</comment>
<dbReference type="EMBL" id="Z17223">
    <property type="protein sequence ID" value="CAA78931.1"/>
    <property type="molecule type" value="mRNA"/>
</dbReference>
<dbReference type="PIR" id="A48130">
    <property type="entry name" value="A48130"/>
</dbReference>
<dbReference type="RefSeq" id="NP_058845.1">
    <property type="nucleotide sequence ID" value="NM_017149.1"/>
</dbReference>
<dbReference type="SMR" id="P39020"/>
<dbReference type="FunCoup" id="P39020">
    <property type="interactions" value="405"/>
</dbReference>
<dbReference type="STRING" id="10116.ENSRNOP00000008803"/>
<dbReference type="iPTMnet" id="P39020"/>
<dbReference type="PhosphoSitePlus" id="P39020"/>
<dbReference type="PaxDb" id="10116-ENSRNOP00000008803"/>
<dbReference type="GeneID" id="29279"/>
<dbReference type="KEGG" id="rno:29279"/>
<dbReference type="UCSC" id="RGD:3079">
    <property type="organism name" value="rat"/>
</dbReference>
<dbReference type="AGR" id="RGD:3079"/>
<dbReference type="CTD" id="4223"/>
<dbReference type="RGD" id="3079">
    <property type="gene designation" value="Meox2"/>
</dbReference>
<dbReference type="eggNOG" id="KOG0489">
    <property type="taxonomic scope" value="Eukaryota"/>
</dbReference>
<dbReference type="InParanoid" id="P39020"/>
<dbReference type="PhylomeDB" id="P39020"/>
<dbReference type="PRO" id="PR:P39020"/>
<dbReference type="Proteomes" id="UP000002494">
    <property type="component" value="Unplaced"/>
</dbReference>
<dbReference type="GO" id="GO:0005737">
    <property type="term" value="C:cytoplasm"/>
    <property type="evidence" value="ECO:0000266"/>
    <property type="project" value="RGD"/>
</dbReference>
<dbReference type="GO" id="GO:0016607">
    <property type="term" value="C:nuclear speck"/>
    <property type="evidence" value="ECO:0007669"/>
    <property type="project" value="UniProtKB-SubCell"/>
</dbReference>
<dbReference type="GO" id="GO:0005634">
    <property type="term" value="C:nucleus"/>
    <property type="evidence" value="ECO:0000266"/>
    <property type="project" value="RGD"/>
</dbReference>
<dbReference type="GO" id="GO:0001228">
    <property type="term" value="F:DNA-binding transcription activator activity, RNA polymerase II-specific"/>
    <property type="evidence" value="ECO:0000266"/>
    <property type="project" value="RGD"/>
</dbReference>
<dbReference type="GO" id="GO:0003700">
    <property type="term" value="F:DNA-binding transcription factor activity"/>
    <property type="evidence" value="ECO:0000266"/>
    <property type="project" value="RGD"/>
</dbReference>
<dbReference type="GO" id="GO:0000981">
    <property type="term" value="F:DNA-binding transcription factor activity, RNA polymerase II-specific"/>
    <property type="evidence" value="ECO:0000318"/>
    <property type="project" value="GO_Central"/>
</dbReference>
<dbReference type="GO" id="GO:0000978">
    <property type="term" value="F:RNA polymerase II cis-regulatory region sequence-specific DNA binding"/>
    <property type="evidence" value="ECO:0000266"/>
    <property type="project" value="RGD"/>
</dbReference>
<dbReference type="GO" id="GO:0043565">
    <property type="term" value="F:sequence-specific DNA binding"/>
    <property type="evidence" value="ECO:0000266"/>
    <property type="project" value="RGD"/>
</dbReference>
<dbReference type="GO" id="GO:1990837">
    <property type="term" value="F:sequence-specific double-stranded DNA binding"/>
    <property type="evidence" value="ECO:0000266"/>
    <property type="project" value="RGD"/>
</dbReference>
<dbReference type="GO" id="GO:0001525">
    <property type="term" value="P:angiogenesis"/>
    <property type="evidence" value="ECO:0000266"/>
    <property type="project" value="RGD"/>
</dbReference>
<dbReference type="GO" id="GO:0048144">
    <property type="term" value="P:fibroblast proliferation"/>
    <property type="evidence" value="ECO:0000315"/>
    <property type="project" value="RGD"/>
</dbReference>
<dbReference type="GO" id="GO:0060173">
    <property type="term" value="P:limb development"/>
    <property type="evidence" value="ECO:0000266"/>
    <property type="project" value="RGD"/>
</dbReference>
<dbReference type="GO" id="GO:0036446">
    <property type="term" value="P:myofibroblast differentiation"/>
    <property type="evidence" value="ECO:0000270"/>
    <property type="project" value="RGD"/>
</dbReference>
<dbReference type="GO" id="GO:0090051">
    <property type="term" value="P:negative regulation of cell migration involved in sprouting angiogenesis"/>
    <property type="evidence" value="ECO:0000266"/>
    <property type="project" value="RGD"/>
</dbReference>
<dbReference type="GO" id="GO:0045944">
    <property type="term" value="P:positive regulation of transcription by RNA polymerase II"/>
    <property type="evidence" value="ECO:0000266"/>
    <property type="project" value="RGD"/>
</dbReference>
<dbReference type="GO" id="GO:0006357">
    <property type="term" value="P:regulation of transcription by RNA polymerase II"/>
    <property type="evidence" value="ECO:0000318"/>
    <property type="project" value="GO_Central"/>
</dbReference>
<dbReference type="GO" id="GO:0060021">
    <property type="term" value="P:roof of mouth development"/>
    <property type="evidence" value="ECO:0000266"/>
    <property type="project" value="RGD"/>
</dbReference>
<dbReference type="GO" id="GO:0007519">
    <property type="term" value="P:skeletal muscle tissue development"/>
    <property type="evidence" value="ECO:0000266"/>
    <property type="project" value="RGD"/>
</dbReference>
<dbReference type="GO" id="GO:0061053">
    <property type="term" value="P:somite development"/>
    <property type="evidence" value="ECO:0000318"/>
    <property type="project" value="GO_Central"/>
</dbReference>
<dbReference type="GO" id="GO:0001757">
    <property type="term" value="P:somite specification"/>
    <property type="evidence" value="ECO:0000266"/>
    <property type="project" value="RGD"/>
</dbReference>
<dbReference type="CDD" id="cd00086">
    <property type="entry name" value="homeodomain"/>
    <property type="match status" value="1"/>
</dbReference>
<dbReference type="FunFam" id="1.10.10.60:FF:000109">
    <property type="entry name" value="Homeobox protein MOX-2"/>
    <property type="match status" value="1"/>
</dbReference>
<dbReference type="Gene3D" id="1.10.10.60">
    <property type="entry name" value="Homeodomain-like"/>
    <property type="match status" value="1"/>
</dbReference>
<dbReference type="InterPro" id="IPR001356">
    <property type="entry name" value="HD"/>
</dbReference>
<dbReference type="InterPro" id="IPR020479">
    <property type="entry name" value="HD_metazoa"/>
</dbReference>
<dbReference type="InterPro" id="IPR017970">
    <property type="entry name" value="Homeobox_CS"/>
</dbReference>
<dbReference type="InterPro" id="IPR009057">
    <property type="entry name" value="Homeodomain-like_sf"/>
</dbReference>
<dbReference type="InterPro" id="IPR042634">
    <property type="entry name" value="MOX-1/MOX-2"/>
</dbReference>
<dbReference type="PANTHER" id="PTHR24328">
    <property type="entry name" value="HOMEOBOX PROTEIN MOX"/>
    <property type="match status" value="1"/>
</dbReference>
<dbReference type="PANTHER" id="PTHR24328:SF1">
    <property type="entry name" value="HOMEOBOX PROTEIN MOX-2"/>
    <property type="match status" value="1"/>
</dbReference>
<dbReference type="Pfam" id="PF00046">
    <property type="entry name" value="Homeodomain"/>
    <property type="match status" value="1"/>
</dbReference>
<dbReference type="PRINTS" id="PR00024">
    <property type="entry name" value="HOMEOBOX"/>
</dbReference>
<dbReference type="SMART" id="SM00389">
    <property type="entry name" value="HOX"/>
    <property type="match status" value="1"/>
</dbReference>
<dbReference type="SUPFAM" id="SSF46689">
    <property type="entry name" value="Homeodomain-like"/>
    <property type="match status" value="1"/>
</dbReference>
<dbReference type="PROSITE" id="PS00027">
    <property type="entry name" value="HOMEOBOX_1"/>
    <property type="match status" value="1"/>
</dbReference>
<dbReference type="PROSITE" id="PS50071">
    <property type="entry name" value="HOMEOBOX_2"/>
    <property type="match status" value="1"/>
</dbReference>
<organism>
    <name type="scientific">Rattus norvegicus</name>
    <name type="common">Rat</name>
    <dbReference type="NCBI Taxonomy" id="10116"/>
    <lineage>
        <taxon>Eukaryota</taxon>
        <taxon>Metazoa</taxon>
        <taxon>Chordata</taxon>
        <taxon>Craniata</taxon>
        <taxon>Vertebrata</taxon>
        <taxon>Euteleostomi</taxon>
        <taxon>Mammalia</taxon>
        <taxon>Eutheria</taxon>
        <taxon>Euarchontoglires</taxon>
        <taxon>Glires</taxon>
        <taxon>Rodentia</taxon>
        <taxon>Myomorpha</taxon>
        <taxon>Muroidea</taxon>
        <taxon>Muridae</taxon>
        <taxon>Murinae</taxon>
        <taxon>Rattus</taxon>
    </lineage>
</organism>
<sequence>MEHPLFGCLRSPHATAQGLHPFSQSSLALHGRSDHMSYPELSTSSSSCIIAGYPNEEGMFASQHHRGHHHHHHHHHHHHQQQQHQALQSNWHLPQMSSPPSAARHSLCLQPDSGGPPELGSSPPVLCSNSSSLGSSTPTGAACAPRDYGRQALSPAEVEKRSGSKRKSDSSDSQEGNYKSEVNSKPRKERTAFTKEQIRELEAEFAHHNYLTRLRRYEIAVNLDLTERQVKVWFQNRRMKWKRVKGGQQGAAAREKELVNVKKGTLLPSELSGIGAATLQQTGDSLANDDSRDSDHSSEHAHL</sequence>
<gene>
    <name evidence="7" type="primary">Meox2</name>
    <name evidence="6" type="synonym">Gax</name>
    <name evidence="1" type="synonym">Mox-2</name>
    <name evidence="1" type="synonym">Mox2</name>
</gene>
<keyword id="KW-0010">Activator</keyword>
<keyword id="KW-0217">Developmental protein</keyword>
<keyword id="KW-0238">DNA-binding</keyword>
<keyword id="KW-0371">Homeobox</keyword>
<keyword id="KW-0539">Nucleus</keyword>
<keyword id="KW-1185">Reference proteome</keyword>
<keyword id="KW-0804">Transcription</keyword>
<keyword id="KW-0805">Transcription regulation</keyword>
<proteinExistence type="evidence at transcript level"/>
<protein>
    <recommendedName>
        <fullName evidence="1">Homeobox protein MOX-2</fullName>
    </recommendedName>
    <alternativeName>
        <fullName evidence="6">Growth arrest-specific homeobox</fullName>
    </alternativeName>
    <alternativeName>
        <fullName evidence="1">Mesenchyme homeobox 2</fullName>
    </alternativeName>
</protein>
<reference key="1">
    <citation type="journal article" date="1993" name="Mol. Cell. Biol.">
        <title>Molecular cloning of a diverged homeobox gene that is rapidly down-regulated during the G0/G1 transition in vascular smooth muscle cells.</title>
        <authorList>
            <person name="Gorski D.H."/>
            <person name="Lepage D.F."/>
            <person name="Patel C.V."/>
            <person name="Copeland N.G."/>
            <person name="Jenkins N.A."/>
            <person name="Walsh K."/>
        </authorList>
    </citation>
    <scope>NUCLEOTIDE SEQUENCE [MRNA]</scope>
    <scope>TISSUE SPECIFICITY</scope>
    <scope>INDUCTION</scope>
    <source>
        <tissue>Aorta</tissue>
    </source>
</reference>
<reference key="2">
    <citation type="submission" date="1993-03" db="EMBL/GenBank/DDBJ databases">
        <authorList>
            <person name="Walsh K."/>
        </authorList>
    </citation>
    <scope>SEQUENCE REVISION</scope>
</reference>
<accession>P39020</accession>